<evidence type="ECO:0000255" key="1">
    <source>
        <dbReference type="HAMAP-Rule" id="MF_00835"/>
    </source>
</evidence>
<reference key="1">
    <citation type="journal article" date="2009" name="PLoS Genet.">
        <title>The complete genome and proteome of Laribacter hongkongensis reveal potential mechanisms for adaptations to different temperatures and habitats.</title>
        <authorList>
            <person name="Woo P.C.Y."/>
            <person name="Lau S.K.P."/>
            <person name="Tse H."/>
            <person name="Teng J.L.L."/>
            <person name="Curreem S.O."/>
            <person name="Tsang A.K.L."/>
            <person name="Fan R.Y.Y."/>
            <person name="Wong G.K.M."/>
            <person name="Huang Y."/>
            <person name="Loman N.J."/>
            <person name="Snyder L.A.S."/>
            <person name="Cai J.J."/>
            <person name="Huang J.-D."/>
            <person name="Mak W."/>
            <person name="Pallen M.J."/>
            <person name="Lok S."/>
            <person name="Yuen K.-Y."/>
        </authorList>
    </citation>
    <scope>NUCLEOTIDE SEQUENCE [LARGE SCALE GENOMIC DNA]</scope>
    <source>
        <strain>HLHK9</strain>
    </source>
</reference>
<sequence length="297" mass="33014">MTEAFYTDKSRVRASFDRAAATYDRAAVLQREVCDRMATRLDLIRHAPARVLDAGSGTGYGAGLLRARYPEAQVTELDLAPSMLRASRDKQLPQGRLRRLFARAPALVCADLEQLPLASGSLDMVWSSLALQWLNTPDAVLAEFHRVLRVDGLLMFATLGPDTLKELRQAFAGIDGATHVNQFIDMHDMGDALVRAGFATPVMDVERIVLTYDEVKAVMRDLKAIGAHNATAGRGRGLMGRQAWQRIEAAYDRLRQDGRLPATYEVVYGHAWRPAARPRRKLDDGRDIIEFHPHAPA</sequence>
<accession>C1D5S5</accession>
<proteinExistence type="inferred from homology"/>
<organism>
    <name type="scientific">Laribacter hongkongensis (strain HLHK9)</name>
    <dbReference type="NCBI Taxonomy" id="557598"/>
    <lineage>
        <taxon>Bacteria</taxon>
        <taxon>Pseudomonadati</taxon>
        <taxon>Pseudomonadota</taxon>
        <taxon>Betaproteobacteria</taxon>
        <taxon>Neisseriales</taxon>
        <taxon>Aquaspirillaceae</taxon>
        <taxon>Laribacter</taxon>
    </lineage>
</organism>
<feature type="chain" id="PRO_0000412507" description="Malonyl-[acyl-carrier protein] O-methyltransferase">
    <location>
        <begin position="1"/>
        <end position="297"/>
    </location>
</feature>
<gene>
    <name evidence="1" type="primary">bioC</name>
    <name type="ordered locus">LHK_03114</name>
</gene>
<keyword id="KW-0093">Biotin biosynthesis</keyword>
<keyword id="KW-0489">Methyltransferase</keyword>
<keyword id="KW-1185">Reference proteome</keyword>
<keyword id="KW-0949">S-adenosyl-L-methionine</keyword>
<keyword id="KW-0808">Transferase</keyword>
<protein>
    <recommendedName>
        <fullName evidence="1">Malonyl-[acyl-carrier protein] O-methyltransferase</fullName>
        <shortName evidence="1">Malonyl-ACP O-methyltransferase</shortName>
        <ecNumber evidence="1">2.1.1.197</ecNumber>
    </recommendedName>
    <alternativeName>
        <fullName evidence="1">Biotin synthesis protein BioC</fullName>
    </alternativeName>
</protein>
<dbReference type="EC" id="2.1.1.197" evidence="1"/>
<dbReference type="EMBL" id="CP001154">
    <property type="protein sequence ID" value="ACO76092.1"/>
    <property type="molecule type" value="Genomic_DNA"/>
</dbReference>
<dbReference type="RefSeq" id="WP_012698555.1">
    <property type="nucleotide sequence ID" value="NC_012559.1"/>
</dbReference>
<dbReference type="SMR" id="C1D5S5"/>
<dbReference type="STRING" id="557598.LHK_03114"/>
<dbReference type="GeneID" id="75108314"/>
<dbReference type="KEGG" id="lhk:LHK_03114"/>
<dbReference type="eggNOG" id="COG2226">
    <property type="taxonomic scope" value="Bacteria"/>
</dbReference>
<dbReference type="HOGENOM" id="CLU_046586_2_1_4"/>
<dbReference type="UniPathway" id="UPA00078"/>
<dbReference type="Proteomes" id="UP000002010">
    <property type="component" value="Chromosome"/>
</dbReference>
<dbReference type="GO" id="GO:0010340">
    <property type="term" value="F:carboxyl-O-methyltransferase activity"/>
    <property type="evidence" value="ECO:0007669"/>
    <property type="project" value="UniProtKB-UniRule"/>
</dbReference>
<dbReference type="GO" id="GO:0102130">
    <property type="term" value="F:malonyl-CoA methyltransferase activity"/>
    <property type="evidence" value="ECO:0007669"/>
    <property type="project" value="UniProtKB-EC"/>
</dbReference>
<dbReference type="GO" id="GO:0008757">
    <property type="term" value="F:S-adenosylmethionine-dependent methyltransferase activity"/>
    <property type="evidence" value="ECO:0007669"/>
    <property type="project" value="InterPro"/>
</dbReference>
<dbReference type="GO" id="GO:0009102">
    <property type="term" value="P:biotin biosynthetic process"/>
    <property type="evidence" value="ECO:0007669"/>
    <property type="project" value="UniProtKB-UniRule"/>
</dbReference>
<dbReference type="GO" id="GO:0032259">
    <property type="term" value="P:methylation"/>
    <property type="evidence" value="ECO:0007669"/>
    <property type="project" value="UniProtKB-KW"/>
</dbReference>
<dbReference type="CDD" id="cd02440">
    <property type="entry name" value="AdoMet_MTases"/>
    <property type="match status" value="1"/>
</dbReference>
<dbReference type="Gene3D" id="3.40.50.150">
    <property type="entry name" value="Vaccinia Virus protein VP39"/>
    <property type="match status" value="1"/>
</dbReference>
<dbReference type="HAMAP" id="MF_00835">
    <property type="entry name" value="BioC"/>
    <property type="match status" value="1"/>
</dbReference>
<dbReference type="InterPro" id="IPR011814">
    <property type="entry name" value="BioC"/>
</dbReference>
<dbReference type="InterPro" id="IPR050602">
    <property type="entry name" value="Malonyl-ACP_OMT"/>
</dbReference>
<dbReference type="InterPro" id="IPR013216">
    <property type="entry name" value="Methyltransf_11"/>
</dbReference>
<dbReference type="InterPro" id="IPR029063">
    <property type="entry name" value="SAM-dependent_MTases_sf"/>
</dbReference>
<dbReference type="NCBIfam" id="TIGR02072">
    <property type="entry name" value="BioC"/>
    <property type="match status" value="1"/>
</dbReference>
<dbReference type="PANTHER" id="PTHR13090">
    <property type="entry name" value="ARGININE-HYDROXYLASE NDUFAF5, MITOCHONDRIAL"/>
    <property type="match status" value="1"/>
</dbReference>
<dbReference type="PANTHER" id="PTHR13090:SF1">
    <property type="entry name" value="ARGININE-HYDROXYLASE NDUFAF5, MITOCHONDRIAL"/>
    <property type="match status" value="1"/>
</dbReference>
<dbReference type="Pfam" id="PF08241">
    <property type="entry name" value="Methyltransf_11"/>
    <property type="match status" value="1"/>
</dbReference>
<dbReference type="SUPFAM" id="SSF53335">
    <property type="entry name" value="S-adenosyl-L-methionine-dependent methyltransferases"/>
    <property type="match status" value="1"/>
</dbReference>
<comment type="function">
    <text evidence="1">Converts the free carboxyl group of a malonyl-thioester to its methyl ester by transfer of a methyl group from S-adenosyl-L-methionine (SAM). It allows to synthesize pimeloyl-ACP via the fatty acid synthetic pathway.</text>
</comment>
<comment type="catalytic activity">
    <reaction evidence="1">
        <text>malonyl-[ACP] + S-adenosyl-L-methionine = malonyl-[ACP] methyl ester + S-adenosyl-L-homocysteine</text>
        <dbReference type="Rhea" id="RHEA:17105"/>
        <dbReference type="Rhea" id="RHEA-COMP:9623"/>
        <dbReference type="Rhea" id="RHEA-COMP:9954"/>
        <dbReference type="ChEBI" id="CHEBI:57856"/>
        <dbReference type="ChEBI" id="CHEBI:59789"/>
        <dbReference type="ChEBI" id="CHEBI:78449"/>
        <dbReference type="ChEBI" id="CHEBI:78845"/>
        <dbReference type="EC" id="2.1.1.197"/>
    </reaction>
</comment>
<comment type="pathway">
    <text evidence="1">Cofactor biosynthesis; biotin biosynthesis.</text>
</comment>
<comment type="similarity">
    <text evidence="1">Belongs to the methyltransferase superfamily.</text>
</comment>
<name>BIOC_LARHH</name>